<organism>
    <name type="scientific">Marinobacter nauticus (strain ATCC 700491 / DSM 11845 / VT8)</name>
    <name type="common">Marinobacter aquaeolei</name>
    <dbReference type="NCBI Taxonomy" id="351348"/>
    <lineage>
        <taxon>Bacteria</taxon>
        <taxon>Pseudomonadati</taxon>
        <taxon>Pseudomonadota</taxon>
        <taxon>Gammaproteobacteria</taxon>
        <taxon>Pseudomonadales</taxon>
        <taxon>Marinobacteraceae</taxon>
        <taxon>Marinobacter</taxon>
    </lineage>
</organism>
<dbReference type="EC" id="2.1.1.77" evidence="1"/>
<dbReference type="EMBL" id="CP000514">
    <property type="protein sequence ID" value="ABM19966.1"/>
    <property type="molecule type" value="Genomic_DNA"/>
</dbReference>
<dbReference type="RefSeq" id="WP_011786334.1">
    <property type="nucleotide sequence ID" value="NC_008740.1"/>
</dbReference>
<dbReference type="SMR" id="A1U4P7"/>
<dbReference type="STRING" id="351348.Maqu_2892"/>
<dbReference type="GeneID" id="31822174"/>
<dbReference type="KEGG" id="maq:Maqu_2892"/>
<dbReference type="eggNOG" id="COG2518">
    <property type="taxonomic scope" value="Bacteria"/>
</dbReference>
<dbReference type="HOGENOM" id="CLU_055432_2_0_6"/>
<dbReference type="OrthoDB" id="9810066at2"/>
<dbReference type="Proteomes" id="UP000000998">
    <property type="component" value="Chromosome"/>
</dbReference>
<dbReference type="GO" id="GO:0005737">
    <property type="term" value="C:cytoplasm"/>
    <property type="evidence" value="ECO:0007669"/>
    <property type="project" value="UniProtKB-SubCell"/>
</dbReference>
<dbReference type="GO" id="GO:0004719">
    <property type="term" value="F:protein-L-isoaspartate (D-aspartate) O-methyltransferase activity"/>
    <property type="evidence" value="ECO:0007669"/>
    <property type="project" value="UniProtKB-UniRule"/>
</dbReference>
<dbReference type="GO" id="GO:0032259">
    <property type="term" value="P:methylation"/>
    <property type="evidence" value="ECO:0007669"/>
    <property type="project" value="UniProtKB-KW"/>
</dbReference>
<dbReference type="GO" id="GO:0036211">
    <property type="term" value="P:protein modification process"/>
    <property type="evidence" value="ECO:0007669"/>
    <property type="project" value="UniProtKB-UniRule"/>
</dbReference>
<dbReference type="GO" id="GO:0030091">
    <property type="term" value="P:protein repair"/>
    <property type="evidence" value="ECO:0007669"/>
    <property type="project" value="UniProtKB-UniRule"/>
</dbReference>
<dbReference type="CDD" id="cd02440">
    <property type="entry name" value="AdoMet_MTases"/>
    <property type="match status" value="1"/>
</dbReference>
<dbReference type="FunFam" id="3.40.50.150:FF:000010">
    <property type="entry name" value="Protein-L-isoaspartate O-methyltransferase"/>
    <property type="match status" value="1"/>
</dbReference>
<dbReference type="Gene3D" id="3.40.50.150">
    <property type="entry name" value="Vaccinia Virus protein VP39"/>
    <property type="match status" value="1"/>
</dbReference>
<dbReference type="HAMAP" id="MF_00090">
    <property type="entry name" value="PIMT"/>
    <property type="match status" value="1"/>
</dbReference>
<dbReference type="InterPro" id="IPR000682">
    <property type="entry name" value="PCMT"/>
</dbReference>
<dbReference type="InterPro" id="IPR029063">
    <property type="entry name" value="SAM-dependent_MTases_sf"/>
</dbReference>
<dbReference type="NCBIfam" id="TIGR00080">
    <property type="entry name" value="pimt"/>
    <property type="match status" value="1"/>
</dbReference>
<dbReference type="NCBIfam" id="NF001453">
    <property type="entry name" value="PRK00312.1"/>
    <property type="match status" value="1"/>
</dbReference>
<dbReference type="PANTHER" id="PTHR11579">
    <property type="entry name" value="PROTEIN-L-ISOASPARTATE O-METHYLTRANSFERASE"/>
    <property type="match status" value="1"/>
</dbReference>
<dbReference type="PANTHER" id="PTHR11579:SF0">
    <property type="entry name" value="PROTEIN-L-ISOASPARTATE(D-ASPARTATE) O-METHYLTRANSFERASE"/>
    <property type="match status" value="1"/>
</dbReference>
<dbReference type="Pfam" id="PF01135">
    <property type="entry name" value="PCMT"/>
    <property type="match status" value="1"/>
</dbReference>
<dbReference type="SUPFAM" id="SSF53335">
    <property type="entry name" value="S-adenosyl-L-methionine-dependent methyltransferases"/>
    <property type="match status" value="1"/>
</dbReference>
<dbReference type="PROSITE" id="PS01279">
    <property type="entry name" value="PCMT"/>
    <property type="match status" value="1"/>
</dbReference>
<reference key="1">
    <citation type="journal article" date="2011" name="Appl. Environ. Microbiol.">
        <title>Genomic potential of Marinobacter aquaeolei, a biogeochemical 'opportunitroph'.</title>
        <authorList>
            <person name="Singer E."/>
            <person name="Webb E.A."/>
            <person name="Nelson W.C."/>
            <person name="Heidelberg J.F."/>
            <person name="Ivanova N."/>
            <person name="Pati A."/>
            <person name="Edwards K.J."/>
        </authorList>
    </citation>
    <scope>NUCLEOTIDE SEQUENCE [LARGE SCALE GENOMIC DNA]</scope>
    <source>
        <strain>ATCC 700491 / DSM 11845 / VT8</strain>
    </source>
</reference>
<protein>
    <recommendedName>
        <fullName evidence="1">Protein-L-isoaspartate O-methyltransferase 2</fullName>
        <ecNumber evidence="1">2.1.1.77</ecNumber>
    </recommendedName>
    <alternativeName>
        <fullName evidence="1">L-isoaspartyl protein carboxyl methyltransferase 2</fullName>
    </alternativeName>
    <alternativeName>
        <fullName evidence="1">Protein L-isoaspartyl methyltransferase 2</fullName>
    </alternativeName>
    <alternativeName>
        <fullName evidence="1">Protein-beta-aspartate methyltransferase 2</fullName>
        <shortName evidence="1">PIMT 2</shortName>
    </alternativeName>
</protein>
<comment type="function">
    <text evidence="1">Catalyzes the methyl esterification of L-isoaspartyl residues in peptides and proteins that result from spontaneous decomposition of normal L-aspartyl and L-asparaginyl residues. It plays a role in the repair and/or degradation of damaged proteins.</text>
</comment>
<comment type="catalytic activity">
    <reaction evidence="1">
        <text>[protein]-L-isoaspartate + S-adenosyl-L-methionine = [protein]-L-isoaspartate alpha-methyl ester + S-adenosyl-L-homocysteine</text>
        <dbReference type="Rhea" id="RHEA:12705"/>
        <dbReference type="Rhea" id="RHEA-COMP:12143"/>
        <dbReference type="Rhea" id="RHEA-COMP:12144"/>
        <dbReference type="ChEBI" id="CHEBI:57856"/>
        <dbReference type="ChEBI" id="CHEBI:59789"/>
        <dbReference type="ChEBI" id="CHEBI:90596"/>
        <dbReference type="ChEBI" id="CHEBI:90598"/>
        <dbReference type="EC" id="2.1.1.77"/>
    </reaction>
</comment>
<comment type="subcellular location">
    <subcellularLocation>
        <location evidence="1">Cytoplasm</location>
    </subcellularLocation>
</comment>
<comment type="similarity">
    <text evidence="1">Belongs to the methyltransferase superfamily. L-isoaspartyl/D-aspartyl protein methyltransferase family.</text>
</comment>
<evidence type="ECO:0000255" key="1">
    <source>
        <dbReference type="HAMAP-Rule" id="MF_00090"/>
    </source>
</evidence>
<gene>
    <name evidence="1" type="primary">pcm2</name>
    <name type="ordered locus">Maqu_2892</name>
</gene>
<sequence>MNKDGQDLSDIRRAMVRCQLVPRGISDGRVLEAMERVPREQFVPEHLRFEAYEDHPVPIGQGQTISQPYIVALMAEALCLKGRERVLDIGTGSGYAAAVLASLALEVFSIERIPELAAQARKNLDRTGFTQVHVKCADGTLGWPEAAPFDGICVAAGAPAVPAALKQQLAVGGRLVIPVGTEGGLQQLLCITRLSDSEYEQASYGDVRFVPLLGEEGWP</sequence>
<feature type="chain" id="PRO_0000351877" description="Protein-L-isoaspartate O-methyltransferase 2">
    <location>
        <begin position="1"/>
        <end position="219"/>
    </location>
</feature>
<feature type="active site" evidence="1">
    <location>
        <position position="66"/>
    </location>
</feature>
<accession>A1U4P7</accession>
<proteinExistence type="inferred from homology"/>
<keyword id="KW-0963">Cytoplasm</keyword>
<keyword id="KW-0489">Methyltransferase</keyword>
<keyword id="KW-0949">S-adenosyl-L-methionine</keyword>
<keyword id="KW-0808">Transferase</keyword>
<name>PIMT2_MARN8</name>